<comment type="function">
    <text evidence="1">May function in recognizing stalled ribosomes, interact with stem-loop structures in stalled mRNA molecules, and effect endonucleolytic cleavage of the mRNA. May play a role in the release non-functional ribosomes and degradation of damaged mRNAs. Has endoribonuclease activity.</text>
</comment>
<comment type="cofactor">
    <cofactor evidence="1">
        <name>a divalent metal cation</name>
        <dbReference type="ChEBI" id="CHEBI:60240"/>
    </cofactor>
</comment>
<comment type="subunit">
    <text evidence="1">Monomer.</text>
</comment>
<comment type="subcellular location">
    <subcellularLocation>
        <location evidence="1">Cytoplasm</location>
    </subcellularLocation>
</comment>
<comment type="domain">
    <text evidence="1">The N-terminal domain has the RNA-binding Sm fold. It harbors the endoribonuclease activity.</text>
</comment>
<comment type="similarity">
    <text evidence="1">Belongs to the eukaryotic release factor 1 family. Pelota subfamily.</text>
</comment>
<protein>
    <recommendedName>
        <fullName evidence="1">Protein pelota homolog</fullName>
        <ecNumber evidence="1">3.1.-.-</ecNumber>
    </recommendedName>
</protein>
<gene>
    <name evidence="1" type="primary">pelA</name>
    <name type="ordered locus">Memar_0937</name>
</gene>
<accession>A3CU20</accession>
<dbReference type="EC" id="3.1.-.-" evidence="1"/>
<dbReference type="EMBL" id="CP000562">
    <property type="protein sequence ID" value="ABN56870.1"/>
    <property type="molecule type" value="Genomic_DNA"/>
</dbReference>
<dbReference type="RefSeq" id="WP_011843781.1">
    <property type="nucleotide sequence ID" value="NC_009051.1"/>
</dbReference>
<dbReference type="SMR" id="A3CU20"/>
<dbReference type="STRING" id="368407.Memar_0937"/>
<dbReference type="GeneID" id="4847051"/>
<dbReference type="KEGG" id="mem:Memar_0937"/>
<dbReference type="eggNOG" id="arCOG01741">
    <property type="taxonomic scope" value="Archaea"/>
</dbReference>
<dbReference type="HOGENOM" id="CLU_023334_0_0_2"/>
<dbReference type="OrthoDB" id="31300at2157"/>
<dbReference type="Proteomes" id="UP000002146">
    <property type="component" value="Chromosome"/>
</dbReference>
<dbReference type="GO" id="GO:0005737">
    <property type="term" value="C:cytoplasm"/>
    <property type="evidence" value="ECO:0007669"/>
    <property type="project" value="UniProtKB-SubCell"/>
</dbReference>
<dbReference type="GO" id="GO:0004519">
    <property type="term" value="F:endonuclease activity"/>
    <property type="evidence" value="ECO:0007669"/>
    <property type="project" value="UniProtKB-UniRule"/>
</dbReference>
<dbReference type="GO" id="GO:0046872">
    <property type="term" value="F:metal ion binding"/>
    <property type="evidence" value="ECO:0007669"/>
    <property type="project" value="UniProtKB-UniRule"/>
</dbReference>
<dbReference type="GO" id="GO:0070651">
    <property type="term" value="P:nonfunctional rRNA decay"/>
    <property type="evidence" value="ECO:0007669"/>
    <property type="project" value="TreeGrafter"/>
</dbReference>
<dbReference type="GO" id="GO:0070966">
    <property type="term" value="P:nuclear-transcribed mRNA catabolic process, no-go decay"/>
    <property type="evidence" value="ECO:0007669"/>
    <property type="project" value="InterPro"/>
</dbReference>
<dbReference type="GO" id="GO:0070481">
    <property type="term" value="P:nuclear-transcribed mRNA catabolic process, non-stop decay"/>
    <property type="evidence" value="ECO:0007669"/>
    <property type="project" value="InterPro"/>
</dbReference>
<dbReference type="GO" id="GO:0032790">
    <property type="term" value="P:ribosome disassembly"/>
    <property type="evidence" value="ECO:0007669"/>
    <property type="project" value="TreeGrafter"/>
</dbReference>
<dbReference type="GO" id="GO:0071025">
    <property type="term" value="P:RNA surveillance"/>
    <property type="evidence" value="ECO:0007669"/>
    <property type="project" value="InterPro"/>
</dbReference>
<dbReference type="Gene3D" id="3.30.1330.30">
    <property type="match status" value="1"/>
</dbReference>
<dbReference type="Gene3D" id="3.30.420.60">
    <property type="entry name" value="eRF1 domain 2"/>
    <property type="match status" value="1"/>
</dbReference>
<dbReference type="Gene3D" id="2.30.30.870">
    <property type="entry name" value="Pelota, domain A"/>
    <property type="match status" value="1"/>
</dbReference>
<dbReference type="HAMAP" id="MF_01853">
    <property type="entry name" value="PelO"/>
    <property type="match status" value="1"/>
</dbReference>
<dbReference type="InterPro" id="IPR042226">
    <property type="entry name" value="eFR1_2_sf"/>
</dbReference>
<dbReference type="InterPro" id="IPR005140">
    <property type="entry name" value="eRF1_1_Pelota"/>
</dbReference>
<dbReference type="InterPro" id="IPR005142">
    <property type="entry name" value="eRF1_3"/>
</dbReference>
<dbReference type="InterPro" id="IPR038069">
    <property type="entry name" value="Pelota/DOM34_N"/>
</dbReference>
<dbReference type="InterPro" id="IPR023521">
    <property type="entry name" value="Pelota_arc"/>
</dbReference>
<dbReference type="InterPro" id="IPR029064">
    <property type="entry name" value="Ribosomal_eL30-like_sf"/>
</dbReference>
<dbReference type="InterPro" id="IPR004405">
    <property type="entry name" value="Transl-rel_pelota"/>
</dbReference>
<dbReference type="NCBIfam" id="TIGR00111">
    <property type="entry name" value="pelota"/>
    <property type="match status" value="1"/>
</dbReference>
<dbReference type="PANTHER" id="PTHR10853">
    <property type="entry name" value="PELOTA"/>
    <property type="match status" value="1"/>
</dbReference>
<dbReference type="PANTHER" id="PTHR10853:SF0">
    <property type="entry name" value="PROTEIN PELOTA HOMOLOG"/>
    <property type="match status" value="1"/>
</dbReference>
<dbReference type="Pfam" id="PF03463">
    <property type="entry name" value="eRF1_1"/>
    <property type="match status" value="1"/>
</dbReference>
<dbReference type="Pfam" id="PF03465">
    <property type="entry name" value="eRF1_3"/>
    <property type="match status" value="1"/>
</dbReference>
<dbReference type="SMART" id="SM01194">
    <property type="entry name" value="eRF1_1"/>
    <property type="match status" value="1"/>
</dbReference>
<dbReference type="SUPFAM" id="SSF159065">
    <property type="entry name" value="Dom34/Pelota N-terminal domain-like"/>
    <property type="match status" value="1"/>
</dbReference>
<dbReference type="SUPFAM" id="SSF55315">
    <property type="entry name" value="L30e-like"/>
    <property type="match status" value="1"/>
</dbReference>
<dbReference type="SUPFAM" id="SSF53137">
    <property type="entry name" value="Translational machinery components"/>
    <property type="match status" value="1"/>
</dbReference>
<sequence>MKAEVREMKRQFGEIRLFPETLDDLWHLSHLVGPGDLVFATTFRSVEAATDKLRPEKVEKRPVRLGIWVEKVEFHQHTNRLRIAGIIESGVDVAAHHTLNVEAGFEISVVKRWRPVDCERIRRAVDASAYGVVHVVSVEEGEAQIYRLRQFGPEWVTTVTAGSSKGADTGTRSALFEKTLDTVAAVTGPLVVAGPGFVKDEFAEYVKVRAPDLAGRMVAVETRRIGRGAVQEVIGQGILDRLLGDLHLAREVALMDEVLVRIATEGAVAYGIDEVRKAVAYGAAETVLVADTLLRDDEATGVIEQAERVNATVVVLSTEFEPGERLDAIGGAAALLRYKIE</sequence>
<proteinExistence type="inferred from homology"/>
<feature type="chain" id="PRO_0000361801" description="Protein pelota homolog">
    <location>
        <begin position="1"/>
        <end position="341"/>
    </location>
</feature>
<keyword id="KW-0963">Cytoplasm</keyword>
<keyword id="KW-0255">Endonuclease</keyword>
<keyword id="KW-0378">Hydrolase</keyword>
<keyword id="KW-0479">Metal-binding</keyword>
<keyword id="KW-0540">Nuclease</keyword>
<evidence type="ECO:0000255" key="1">
    <source>
        <dbReference type="HAMAP-Rule" id="MF_01853"/>
    </source>
</evidence>
<organism>
    <name type="scientific">Methanoculleus marisnigri (strain ATCC 35101 / DSM 1498 / JR1)</name>
    <dbReference type="NCBI Taxonomy" id="368407"/>
    <lineage>
        <taxon>Archaea</taxon>
        <taxon>Methanobacteriati</taxon>
        <taxon>Methanobacteriota</taxon>
        <taxon>Stenosarchaea group</taxon>
        <taxon>Methanomicrobia</taxon>
        <taxon>Methanomicrobiales</taxon>
        <taxon>Methanomicrobiaceae</taxon>
        <taxon>Methanoculleus</taxon>
    </lineage>
</organism>
<name>PELO_METMJ</name>
<reference key="1">
    <citation type="journal article" date="2009" name="Stand. Genomic Sci.">
        <title>Complete genome sequence of Methanoculleus marisnigri Romesser et al. 1981 type strain JR1.</title>
        <authorList>
            <person name="Anderson I.J."/>
            <person name="Sieprawska-Lupa M."/>
            <person name="Lapidus A."/>
            <person name="Nolan M."/>
            <person name="Copeland A."/>
            <person name="Glavina Del Rio T."/>
            <person name="Tice H."/>
            <person name="Dalin E."/>
            <person name="Barry K."/>
            <person name="Saunders E."/>
            <person name="Han C."/>
            <person name="Brettin T."/>
            <person name="Detter J.C."/>
            <person name="Bruce D."/>
            <person name="Mikhailova N."/>
            <person name="Pitluck S."/>
            <person name="Hauser L."/>
            <person name="Land M."/>
            <person name="Lucas S."/>
            <person name="Richardson P."/>
            <person name="Whitman W.B."/>
            <person name="Kyrpides N.C."/>
        </authorList>
    </citation>
    <scope>NUCLEOTIDE SEQUENCE [LARGE SCALE GENOMIC DNA]</scope>
    <source>
        <strain>ATCC 35101 / DSM 1498 / JR1</strain>
    </source>
</reference>